<gene>
    <name evidence="1" type="primary">hslV</name>
    <name type="ordered locus">OCAR_4394</name>
    <name type="ordered locus">OCA5_c01370</name>
</gene>
<proteinExistence type="inferred from homology"/>
<feature type="chain" id="PRO_1000100901" description="ATP-dependent protease subunit HslV">
    <location>
        <begin position="1"/>
        <end position="183"/>
    </location>
</feature>
<feature type="active site" evidence="1">
    <location>
        <position position="12"/>
    </location>
</feature>
<feature type="binding site" evidence="1">
    <location>
        <position position="166"/>
    </location>
    <ligand>
        <name>Na(+)</name>
        <dbReference type="ChEBI" id="CHEBI:29101"/>
    </ligand>
</feature>
<feature type="binding site" evidence="1">
    <location>
        <position position="169"/>
    </location>
    <ligand>
        <name>Na(+)</name>
        <dbReference type="ChEBI" id="CHEBI:29101"/>
    </ligand>
</feature>
<feature type="binding site" evidence="1">
    <location>
        <position position="172"/>
    </location>
    <ligand>
        <name>Na(+)</name>
        <dbReference type="ChEBI" id="CHEBI:29101"/>
    </ligand>
</feature>
<comment type="function">
    <text evidence="1">Protease subunit of a proteasome-like degradation complex believed to be a general protein degrading machinery.</text>
</comment>
<comment type="catalytic activity">
    <reaction evidence="1">
        <text>ATP-dependent cleavage of peptide bonds with broad specificity.</text>
        <dbReference type="EC" id="3.4.25.2"/>
    </reaction>
</comment>
<comment type="activity regulation">
    <text evidence="1">Allosterically activated by HslU binding.</text>
</comment>
<comment type="subunit">
    <text evidence="1">A double ring-shaped homohexamer of HslV is capped on each side by a ring-shaped HslU homohexamer. The assembly of the HslU/HslV complex is dependent on binding of ATP.</text>
</comment>
<comment type="subcellular location">
    <subcellularLocation>
        <location evidence="1">Cytoplasm</location>
    </subcellularLocation>
</comment>
<comment type="similarity">
    <text evidence="1">Belongs to the peptidase T1B family. HslV subfamily.</text>
</comment>
<name>HSLV_AFIC5</name>
<sequence>MQNSQAESWHGTTILTVRKGGRVVIGGDGQVSIGQTVIKSNARKVRKLGKGDVIGGFAGATADAFTLFERLEAKLEQYPGQLTRACVELAKDWRTDRYLRRLEAMMIVADKEVSLVLTGTGDVLEPEDGVMAIGSGGNYALAAARALSDSEHDAETIVRRSLEIAADICVYTNRNVTIEALTA</sequence>
<evidence type="ECO:0000255" key="1">
    <source>
        <dbReference type="HAMAP-Rule" id="MF_00248"/>
    </source>
</evidence>
<keyword id="KW-0021">Allosteric enzyme</keyword>
<keyword id="KW-0963">Cytoplasm</keyword>
<keyword id="KW-0378">Hydrolase</keyword>
<keyword id="KW-0479">Metal-binding</keyword>
<keyword id="KW-0645">Protease</keyword>
<keyword id="KW-1185">Reference proteome</keyword>
<keyword id="KW-0915">Sodium</keyword>
<keyword id="KW-0888">Threonine protease</keyword>
<protein>
    <recommendedName>
        <fullName evidence="1">ATP-dependent protease subunit HslV</fullName>
        <ecNumber evidence="1">3.4.25.2</ecNumber>
    </recommendedName>
</protein>
<organism>
    <name type="scientific">Afipia carboxidovorans (strain ATCC 49405 / DSM 1227 / KCTC 32145 / OM5)</name>
    <name type="common">Oligotropha carboxidovorans</name>
    <dbReference type="NCBI Taxonomy" id="504832"/>
    <lineage>
        <taxon>Bacteria</taxon>
        <taxon>Pseudomonadati</taxon>
        <taxon>Pseudomonadota</taxon>
        <taxon>Alphaproteobacteria</taxon>
        <taxon>Hyphomicrobiales</taxon>
        <taxon>Nitrobacteraceae</taxon>
        <taxon>Afipia</taxon>
    </lineage>
</organism>
<accession>B6JAL5</accession>
<accession>F8BRG5</accession>
<dbReference type="EC" id="3.4.25.2" evidence="1"/>
<dbReference type="EMBL" id="CP001196">
    <property type="protein sequence ID" value="ACI91540.1"/>
    <property type="molecule type" value="Genomic_DNA"/>
</dbReference>
<dbReference type="EMBL" id="CP002826">
    <property type="protein sequence ID" value="AEI04869.1"/>
    <property type="molecule type" value="Genomic_DNA"/>
</dbReference>
<dbReference type="RefSeq" id="WP_012561571.1">
    <property type="nucleotide sequence ID" value="NC_015684.1"/>
</dbReference>
<dbReference type="SMR" id="B6JAL5"/>
<dbReference type="STRING" id="504832.OCA5_c01370"/>
<dbReference type="MEROPS" id="T01.006"/>
<dbReference type="KEGG" id="oca:OCAR_4394"/>
<dbReference type="KEGG" id="ocg:OCA5_c01370"/>
<dbReference type="PATRIC" id="fig|504832.7.peg.144"/>
<dbReference type="eggNOG" id="COG5405">
    <property type="taxonomic scope" value="Bacteria"/>
</dbReference>
<dbReference type="HOGENOM" id="CLU_093872_1_0_5"/>
<dbReference type="OrthoDB" id="9804884at2"/>
<dbReference type="Proteomes" id="UP000007730">
    <property type="component" value="Chromosome"/>
</dbReference>
<dbReference type="GO" id="GO:0009376">
    <property type="term" value="C:HslUV protease complex"/>
    <property type="evidence" value="ECO:0007669"/>
    <property type="project" value="UniProtKB-UniRule"/>
</dbReference>
<dbReference type="GO" id="GO:0005839">
    <property type="term" value="C:proteasome core complex"/>
    <property type="evidence" value="ECO:0007669"/>
    <property type="project" value="InterPro"/>
</dbReference>
<dbReference type="GO" id="GO:0046872">
    <property type="term" value="F:metal ion binding"/>
    <property type="evidence" value="ECO:0007669"/>
    <property type="project" value="UniProtKB-KW"/>
</dbReference>
<dbReference type="GO" id="GO:0004298">
    <property type="term" value="F:threonine-type endopeptidase activity"/>
    <property type="evidence" value="ECO:0007669"/>
    <property type="project" value="UniProtKB-KW"/>
</dbReference>
<dbReference type="GO" id="GO:0051603">
    <property type="term" value="P:proteolysis involved in protein catabolic process"/>
    <property type="evidence" value="ECO:0007669"/>
    <property type="project" value="InterPro"/>
</dbReference>
<dbReference type="CDD" id="cd01913">
    <property type="entry name" value="protease_HslV"/>
    <property type="match status" value="1"/>
</dbReference>
<dbReference type="Gene3D" id="3.60.20.10">
    <property type="entry name" value="Glutamine Phosphoribosylpyrophosphate, subunit 1, domain 1"/>
    <property type="match status" value="1"/>
</dbReference>
<dbReference type="HAMAP" id="MF_00248">
    <property type="entry name" value="HslV"/>
    <property type="match status" value="1"/>
</dbReference>
<dbReference type="InterPro" id="IPR022281">
    <property type="entry name" value="ATP-dep_Prtase_HsIV_su"/>
</dbReference>
<dbReference type="InterPro" id="IPR029055">
    <property type="entry name" value="Ntn_hydrolases_N"/>
</dbReference>
<dbReference type="InterPro" id="IPR001353">
    <property type="entry name" value="Proteasome_sua/b"/>
</dbReference>
<dbReference type="InterPro" id="IPR023333">
    <property type="entry name" value="Proteasome_suB-type"/>
</dbReference>
<dbReference type="NCBIfam" id="TIGR03692">
    <property type="entry name" value="ATP_dep_HslV"/>
    <property type="match status" value="1"/>
</dbReference>
<dbReference type="NCBIfam" id="NF003964">
    <property type="entry name" value="PRK05456.1"/>
    <property type="match status" value="1"/>
</dbReference>
<dbReference type="PANTHER" id="PTHR32194:SF7">
    <property type="entry name" value="ATP-DEPENDENT PROTEASE SUBUNIT HSLV"/>
    <property type="match status" value="1"/>
</dbReference>
<dbReference type="PANTHER" id="PTHR32194">
    <property type="entry name" value="METALLOPROTEASE TLDD"/>
    <property type="match status" value="1"/>
</dbReference>
<dbReference type="Pfam" id="PF00227">
    <property type="entry name" value="Proteasome"/>
    <property type="match status" value="1"/>
</dbReference>
<dbReference type="PIRSF" id="PIRSF039093">
    <property type="entry name" value="HslV"/>
    <property type="match status" value="1"/>
</dbReference>
<dbReference type="SUPFAM" id="SSF56235">
    <property type="entry name" value="N-terminal nucleophile aminohydrolases (Ntn hydrolases)"/>
    <property type="match status" value="1"/>
</dbReference>
<dbReference type="PROSITE" id="PS51476">
    <property type="entry name" value="PROTEASOME_BETA_2"/>
    <property type="match status" value="1"/>
</dbReference>
<reference key="1">
    <citation type="journal article" date="2008" name="J. Bacteriol.">
        <title>Genome sequence of the chemolithoautotrophic bacterium Oligotropha carboxidovorans OM5T.</title>
        <authorList>
            <person name="Paul D."/>
            <person name="Bridges S."/>
            <person name="Burgess S.C."/>
            <person name="Dandass Y."/>
            <person name="Lawrence M.L."/>
        </authorList>
    </citation>
    <scope>NUCLEOTIDE SEQUENCE [LARGE SCALE GENOMIC DNA]</scope>
    <source>
        <strain>ATCC 49405 / DSM 1227 / KCTC 32145 / OM5</strain>
    </source>
</reference>
<reference key="2">
    <citation type="journal article" date="2011" name="J. Bacteriol.">
        <title>Complete genome sequences of the chemolithoautotrophic Oligotropha carboxidovorans strains OM4 and OM5.</title>
        <authorList>
            <person name="Volland S."/>
            <person name="Rachinger M."/>
            <person name="Strittmatter A."/>
            <person name="Daniel R."/>
            <person name="Gottschalk G."/>
            <person name="Meyer O."/>
        </authorList>
    </citation>
    <scope>NUCLEOTIDE SEQUENCE [LARGE SCALE GENOMIC DNA]</scope>
    <source>
        <strain>ATCC 49405 / DSM 1227 / KCTC 32145 / OM5</strain>
    </source>
</reference>